<reference key="1">
    <citation type="submission" date="1995-10" db="EMBL/GenBank/DDBJ databases">
        <authorList>
            <person name="Delius H."/>
        </authorList>
    </citation>
    <scope>NUCLEOTIDE SEQUENCE [GENOMIC DNA]</scope>
</reference>
<dbReference type="EMBL" id="U31780">
    <property type="protein sequence ID" value="AAA79404.1"/>
    <property type="molecule type" value="Genomic_DNA"/>
</dbReference>
<dbReference type="SMR" id="P50768"/>
<dbReference type="Proteomes" id="UP000009111">
    <property type="component" value="Genome"/>
</dbReference>
<dbReference type="GO" id="GO:0042025">
    <property type="term" value="C:host cell nucleus"/>
    <property type="evidence" value="ECO:0007669"/>
    <property type="project" value="UniProtKB-SubCell"/>
</dbReference>
<dbReference type="GO" id="GO:0003677">
    <property type="term" value="F:DNA binding"/>
    <property type="evidence" value="ECO:0007669"/>
    <property type="project" value="UniProtKB-UniRule"/>
</dbReference>
<dbReference type="GO" id="GO:0003700">
    <property type="term" value="F:DNA-binding transcription factor activity"/>
    <property type="evidence" value="ECO:0007669"/>
    <property type="project" value="UniProtKB-UniRule"/>
</dbReference>
<dbReference type="GO" id="GO:0000166">
    <property type="term" value="F:nucleotide binding"/>
    <property type="evidence" value="ECO:0007669"/>
    <property type="project" value="UniProtKB-UniRule"/>
</dbReference>
<dbReference type="GO" id="GO:0006260">
    <property type="term" value="P:DNA replication"/>
    <property type="evidence" value="ECO:0007669"/>
    <property type="project" value="UniProtKB-KW"/>
</dbReference>
<dbReference type="GO" id="GO:0006351">
    <property type="term" value="P:DNA-templated transcription"/>
    <property type="evidence" value="ECO:0007669"/>
    <property type="project" value="UniProtKB-UniRule"/>
</dbReference>
<dbReference type="GO" id="GO:0006275">
    <property type="term" value="P:regulation of DNA replication"/>
    <property type="evidence" value="ECO:0007669"/>
    <property type="project" value="UniProtKB-UniRule"/>
</dbReference>
<dbReference type="GO" id="GO:0039693">
    <property type="term" value="P:viral DNA genome replication"/>
    <property type="evidence" value="ECO:0007669"/>
    <property type="project" value="UniProtKB-UniRule"/>
</dbReference>
<dbReference type="Gene3D" id="3.30.70.330">
    <property type="match status" value="1"/>
</dbReference>
<dbReference type="Gene3D" id="1.10.287.30">
    <property type="entry name" value="E2 (early) protein, N terminal domain, subdomain 1"/>
    <property type="match status" value="1"/>
</dbReference>
<dbReference type="Gene3D" id="2.170.200.10">
    <property type="entry name" value="Papillomavirus E2 early protein domain"/>
    <property type="match status" value="1"/>
</dbReference>
<dbReference type="HAMAP" id="MF_04001">
    <property type="entry name" value="PPV_E2"/>
    <property type="match status" value="1"/>
</dbReference>
<dbReference type="InterPro" id="IPR035975">
    <property type="entry name" value="E2/EBNA1_C_sf"/>
</dbReference>
<dbReference type="InterPro" id="IPR012677">
    <property type="entry name" value="Nucleotide-bd_a/b_plait_sf"/>
</dbReference>
<dbReference type="InterPro" id="IPR000427">
    <property type="entry name" value="Papillomavirus_E2_C"/>
</dbReference>
<dbReference type="InterPro" id="IPR001866">
    <property type="entry name" value="PPV_E2_N"/>
</dbReference>
<dbReference type="InterPro" id="IPR033668">
    <property type="entry name" value="Reg_prot_E2"/>
</dbReference>
<dbReference type="InterPro" id="IPR036050">
    <property type="entry name" value="Regulatory_protein_E2_N"/>
</dbReference>
<dbReference type="InterPro" id="IPR042503">
    <property type="entry name" value="Regulatory_protein_E2_N_1"/>
</dbReference>
<dbReference type="InterPro" id="IPR042504">
    <property type="entry name" value="Regulatory_protein_E2_N_2"/>
</dbReference>
<dbReference type="Pfam" id="PF00511">
    <property type="entry name" value="PPV_E2_C"/>
    <property type="match status" value="1"/>
</dbReference>
<dbReference type="Pfam" id="PF00508">
    <property type="entry name" value="PPV_E2_N"/>
    <property type="match status" value="1"/>
</dbReference>
<dbReference type="SUPFAM" id="SSF51332">
    <property type="entry name" value="E2 regulatory, transactivation domain"/>
    <property type="match status" value="1"/>
</dbReference>
<dbReference type="SUPFAM" id="SSF54957">
    <property type="entry name" value="Viral DNA-binding domain"/>
    <property type="match status" value="1"/>
</dbReference>
<proteinExistence type="inferred from homology"/>
<keyword id="KW-0010">Activator</keyword>
<keyword id="KW-0235">DNA replication</keyword>
<keyword id="KW-0238">DNA-binding</keyword>
<keyword id="KW-0244">Early protein</keyword>
<keyword id="KW-1048">Host nucleus</keyword>
<keyword id="KW-0597">Phosphoprotein</keyword>
<keyword id="KW-1185">Reference proteome</keyword>
<keyword id="KW-0678">Repressor</keyword>
<keyword id="KW-0804">Transcription</keyword>
<keyword id="KW-0805">Transcription regulation</keyword>
<gene>
    <name evidence="1" type="primary">E2</name>
</gene>
<name>VE2_HPV22</name>
<organism>
    <name type="scientific">Human papillomavirus 22</name>
    <dbReference type="NCBI Taxonomy" id="37954"/>
    <lineage>
        <taxon>Viruses</taxon>
        <taxon>Monodnaviria</taxon>
        <taxon>Shotokuvirae</taxon>
        <taxon>Cossaviricota</taxon>
        <taxon>Papovaviricetes</taxon>
        <taxon>Zurhausenvirales</taxon>
        <taxon>Papillomaviridae</taxon>
        <taxon>Firstpapillomavirinae</taxon>
        <taxon>Betapapillomavirus</taxon>
        <taxon>Betapapillomavirus 2</taxon>
    </lineage>
</organism>
<accession>P50768</accession>
<evidence type="ECO:0000255" key="1">
    <source>
        <dbReference type="HAMAP-Rule" id="MF_04001"/>
    </source>
</evidence>
<evidence type="ECO:0000256" key="2">
    <source>
        <dbReference type="SAM" id="MobiDB-lite"/>
    </source>
</evidence>
<feature type="chain" id="PRO_0000133201" description="Regulatory protein E2">
    <location>
        <begin position="1"/>
        <end position="436"/>
    </location>
</feature>
<feature type="region of interest" description="Transactivation domain" evidence="1">
    <location>
        <begin position="1"/>
        <end position="201"/>
    </location>
</feature>
<feature type="region of interest" description="Disordered" evidence="2">
    <location>
        <begin position="195"/>
        <end position="328"/>
    </location>
</feature>
<feature type="region of interest" description="DNA-binding domain" evidence="1">
    <location>
        <begin position="352"/>
        <end position="436"/>
    </location>
</feature>
<feature type="compositionally biased region" description="Low complexity" evidence="2">
    <location>
        <begin position="195"/>
        <end position="209"/>
    </location>
</feature>
<feature type="compositionally biased region" description="Polar residues" evidence="2">
    <location>
        <begin position="210"/>
        <end position="230"/>
    </location>
</feature>
<feature type="compositionally biased region" description="Basic and acidic residues" evidence="2">
    <location>
        <begin position="284"/>
        <end position="293"/>
    </location>
</feature>
<organismHost>
    <name type="scientific">Homo sapiens</name>
    <name type="common">Human</name>
    <dbReference type="NCBI Taxonomy" id="9606"/>
</organismHost>
<sequence length="436" mass="49729">MEKLSERFSALQEKLMDLYESGVEDLETQIQHWKLLRQEQVLFYYARRHGILRLGYQPVPTLATSESKAKDAIAMGLLLESLQKSQYAEEPWTLVETSLETVKSPPADCFKKGPKSVEVYFDGDPENVMSYTVWSYIYYQTDDESWEKVEGHVDYTGAYYIEGTFKTYYIKFETDAKRYGTTGHWEVHVNKDTVFTPVTSSTPPVGVASQNSAPEPASTSDSPQRSSQVTHRYGRKASSPTITTIRRQKRRERQRQETPTRRRKTRSRSRSTEQRGGRATRRSLSRESAESPRRGGRGGGGPLTRSRSRSRSRTRESVDGGGVAPDEVGATLRSIGRQHSGRLAQLLDAAKDPPVILLRGAANTLKCYRYRFRKKHAGSFQFISTTWSWVGGHTTDRIGRSRILISFHTDREREKCLQQMKLPLGVEWSYGQFDDL</sequence>
<comment type="function">
    <text evidence="1">Plays a role in the initiation of viral DNA replication. A dimer of E2 interacts with a dimer of E1 in order to improve specificity of E1 DNA binding activity. Once the complex recognizes and binds DNA at specific sites, the E2 dimer is removed from DNA. E2 also regulates viral transcription through binding to the E2RE response element (5'-ACCNNNNNNGGT-3') present in multiple copies in the regulatory regions of the viral genome. Activates or represses transcription depending on E2RE's position with regards to proximal promoter elements including the TATA-box. Repression occurs by sterically hindering the assembly of the transcription initiation complex.</text>
</comment>
<comment type="subunit">
    <text evidence="1">Binds DNA as homodimer. Interacts with protein E1; this interaction greatly increases E1 DNA-binding activity. Interacts with protein L1; this interaction enhances E2-dependent replication and transcription activation. Interacts with protein L2; this interaction inhibits E2 transcriptional activity but not DNA replication function E2. Interacts with protein E7; this interaction inhibits E7 oncogenic activity. Interacts with host TAF1; this interaction modulates E2-dependent transcriptional regulation. Interacts with host BRD4; this interaction mediates E2 transcriptional activation function. Additionally, the interaction with host BRD4 on mitotic chromosomes mediates tethering of the viral genome. Interacts with host TOPBP1; this interaction is required for optimal viral DNA replication.</text>
</comment>
<comment type="subcellular location">
    <subcellularLocation>
        <location evidence="1">Host nucleus</location>
    </subcellularLocation>
</comment>
<comment type="PTM">
    <text evidence="1">Phosphorylated.</text>
</comment>
<comment type="similarity">
    <text evidence="1">Belongs to the papillomaviridae E2 protein family.</text>
</comment>
<protein>
    <recommendedName>
        <fullName evidence="1">Regulatory protein E2</fullName>
    </recommendedName>
</protein>